<protein>
    <recommendedName>
        <fullName evidence="6">Probable serine/threonine-protein kinase PBL16</fullName>
        <ecNumber evidence="6">2.7.11.1</ecNumber>
    </recommendedName>
    <alternativeName>
        <fullName evidence="5">PBS1-like protein 16</fullName>
    </alternativeName>
</protein>
<feature type="initiator methionine" description="Removed" evidence="6">
    <location>
        <position position="1"/>
    </location>
</feature>
<feature type="chain" id="PRO_0000401336" description="Probable serine/threonine-protein kinase PBL16">
    <location>
        <begin position="2"/>
        <end position="408"/>
    </location>
</feature>
<feature type="domain" description="Protein kinase" evidence="3">
    <location>
        <begin position="76"/>
        <end position="360"/>
    </location>
</feature>
<feature type="region of interest" description="Disordered" evidence="4">
    <location>
        <begin position="17"/>
        <end position="50"/>
    </location>
</feature>
<feature type="compositionally biased region" description="Polar residues" evidence="4">
    <location>
        <begin position="18"/>
        <end position="30"/>
    </location>
</feature>
<feature type="compositionally biased region" description="Basic and acidic residues" evidence="4">
    <location>
        <begin position="31"/>
        <end position="40"/>
    </location>
</feature>
<feature type="active site" description="Proton acceptor" evidence="3">
    <location>
        <position position="209"/>
    </location>
</feature>
<feature type="binding site" evidence="3">
    <location>
        <begin position="82"/>
        <end position="90"/>
    </location>
    <ligand>
        <name>ATP</name>
        <dbReference type="ChEBI" id="CHEBI:30616"/>
    </ligand>
</feature>
<feature type="binding site" evidence="3">
    <location>
        <position position="113"/>
    </location>
    <ligand>
        <name>ATP</name>
        <dbReference type="ChEBI" id="CHEBI:30616"/>
    </ligand>
</feature>
<feature type="modified residue" description="Phosphothreonine" evidence="1">
    <location>
        <position position="65"/>
    </location>
</feature>
<feature type="modified residue" description="Phosphotyrosine" evidence="1">
    <location>
        <position position="159"/>
    </location>
</feature>
<feature type="modified residue" description="Phosphoserine" evidence="1">
    <location>
        <position position="213"/>
    </location>
</feature>
<feature type="modified residue" description="Phosphoserine" evidence="1">
    <location>
        <position position="243"/>
    </location>
</feature>
<feature type="modified residue" description="Phosphothreonine" evidence="1">
    <location>
        <position position="244"/>
    </location>
</feature>
<feature type="modified residue" description="Phosphothreonine" evidence="1">
    <location>
        <position position="249"/>
    </location>
</feature>
<feature type="modified residue" description="Phosphotyrosine" evidence="1">
    <location>
        <position position="257"/>
    </location>
</feature>
<feature type="lipid moiety-binding region" description="N-myristoyl glycine" evidence="2">
    <location>
        <position position="2"/>
    </location>
</feature>
<feature type="lipid moiety-binding region" description="S-palmitoyl cysteine" evidence="2">
    <location>
        <position position="4"/>
    </location>
</feature>
<accession>Q9FM85</accession>
<evidence type="ECO:0000250" key="1">
    <source>
        <dbReference type="UniProtKB" id="O48814"/>
    </source>
</evidence>
<evidence type="ECO:0000250" key="2">
    <source>
        <dbReference type="UniProtKB" id="Q9FE20"/>
    </source>
</evidence>
<evidence type="ECO:0000255" key="3">
    <source>
        <dbReference type="PROSITE-ProRule" id="PRU00159"/>
    </source>
</evidence>
<evidence type="ECO:0000256" key="4">
    <source>
        <dbReference type="SAM" id="MobiDB-lite"/>
    </source>
</evidence>
<evidence type="ECO:0000303" key="5">
    <source>
    </source>
</evidence>
<evidence type="ECO:0000305" key="6"/>
<evidence type="ECO:0000305" key="7">
    <source>
    </source>
</evidence>
<name>PBL16_ARATH</name>
<gene>
    <name evidence="5" type="primary">PBL16</name>
    <name type="ordered locus">At5g56460</name>
    <name type="ORF">MCD7.23</name>
</gene>
<proteinExistence type="evidence at protein level"/>
<organism>
    <name type="scientific">Arabidopsis thaliana</name>
    <name type="common">Mouse-ear cress</name>
    <dbReference type="NCBI Taxonomy" id="3702"/>
    <lineage>
        <taxon>Eukaryota</taxon>
        <taxon>Viridiplantae</taxon>
        <taxon>Streptophyta</taxon>
        <taxon>Embryophyta</taxon>
        <taxon>Tracheophyta</taxon>
        <taxon>Spermatophyta</taxon>
        <taxon>Magnoliopsida</taxon>
        <taxon>eudicotyledons</taxon>
        <taxon>Gunneridae</taxon>
        <taxon>Pentapetalae</taxon>
        <taxon>rosids</taxon>
        <taxon>malvids</taxon>
        <taxon>Brassicales</taxon>
        <taxon>Brassicaceae</taxon>
        <taxon>Camelineae</taxon>
        <taxon>Arabidopsis</taxon>
    </lineage>
</organism>
<reference key="1">
    <citation type="journal article" date="1998" name="DNA Res.">
        <title>Structural analysis of Arabidopsis thaliana chromosome 5. IV. Sequence features of the regions of 1,456,315 bp covered by nineteen physically assigned P1 and TAC clones.</title>
        <authorList>
            <person name="Sato S."/>
            <person name="Kaneko T."/>
            <person name="Kotani H."/>
            <person name="Nakamura Y."/>
            <person name="Asamizu E."/>
            <person name="Miyajima N."/>
            <person name="Tabata S."/>
        </authorList>
    </citation>
    <scope>NUCLEOTIDE SEQUENCE [LARGE SCALE GENOMIC DNA]</scope>
    <source>
        <strain>cv. Columbia</strain>
    </source>
</reference>
<reference key="2">
    <citation type="journal article" date="2017" name="Plant J.">
        <title>Araport11: a complete reannotation of the Arabidopsis thaliana reference genome.</title>
        <authorList>
            <person name="Cheng C.Y."/>
            <person name="Krishnakumar V."/>
            <person name="Chan A.P."/>
            <person name="Thibaud-Nissen F."/>
            <person name="Schobel S."/>
            <person name="Town C.D."/>
        </authorList>
    </citation>
    <scope>GENOME REANNOTATION</scope>
    <source>
        <strain>cv. Columbia</strain>
    </source>
</reference>
<reference key="3">
    <citation type="journal article" date="2003" name="Science">
        <title>Empirical analysis of transcriptional activity in the Arabidopsis genome.</title>
        <authorList>
            <person name="Yamada K."/>
            <person name="Lim J."/>
            <person name="Dale J.M."/>
            <person name="Chen H."/>
            <person name="Shinn P."/>
            <person name="Palm C.J."/>
            <person name="Southwick A.M."/>
            <person name="Wu H.C."/>
            <person name="Kim C.J."/>
            <person name="Nguyen M."/>
            <person name="Pham P.K."/>
            <person name="Cheuk R.F."/>
            <person name="Karlin-Newmann G."/>
            <person name="Liu S.X."/>
            <person name="Lam B."/>
            <person name="Sakano H."/>
            <person name="Wu T."/>
            <person name="Yu G."/>
            <person name="Miranda M."/>
            <person name="Quach H.L."/>
            <person name="Tripp M."/>
            <person name="Chang C.H."/>
            <person name="Lee J.M."/>
            <person name="Toriumi M.J."/>
            <person name="Chan M.M."/>
            <person name="Tang C.C."/>
            <person name="Onodera C.S."/>
            <person name="Deng J.M."/>
            <person name="Akiyama K."/>
            <person name="Ansari Y."/>
            <person name="Arakawa T."/>
            <person name="Banh J."/>
            <person name="Banno F."/>
            <person name="Bowser L."/>
            <person name="Brooks S.Y."/>
            <person name="Carninci P."/>
            <person name="Chao Q."/>
            <person name="Choy N."/>
            <person name="Enju A."/>
            <person name="Goldsmith A.D."/>
            <person name="Gurjal M."/>
            <person name="Hansen N.F."/>
            <person name="Hayashizaki Y."/>
            <person name="Johnson-Hopson C."/>
            <person name="Hsuan V.W."/>
            <person name="Iida K."/>
            <person name="Karnes M."/>
            <person name="Khan S."/>
            <person name="Koesema E."/>
            <person name="Ishida J."/>
            <person name="Jiang P.X."/>
            <person name="Jones T."/>
            <person name="Kawai J."/>
            <person name="Kamiya A."/>
            <person name="Meyers C."/>
            <person name="Nakajima M."/>
            <person name="Narusaka M."/>
            <person name="Seki M."/>
            <person name="Sakurai T."/>
            <person name="Satou M."/>
            <person name="Tamse R."/>
            <person name="Vaysberg M."/>
            <person name="Wallender E.K."/>
            <person name="Wong C."/>
            <person name="Yamamura Y."/>
            <person name="Yuan S."/>
            <person name="Shinozaki K."/>
            <person name="Davis R.W."/>
            <person name="Theologis A."/>
            <person name="Ecker J.R."/>
        </authorList>
    </citation>
    <scope>NUCLEOTIDE SEQUENCE [LARGE SCALE MRNA]</scope>
    <source>
        <strain>cv. Columbia</strain>
    </source>
</reference>
<reference key="4">
    <citation type="journal article" date="2007" name="Mol. Cell. Proteomics">
        <title>A high content in lipid-modified peripheral proteins and integral receptor kinases features in the arabidopsis plasma membrane proteome.</title>
        <authorList>
            <person name="Marmagne A."/>
            <person name="Ferro M."/>
            <person name="Meinnel T."/>
            <person name="Bruley C."/>
            <person name="Kuhn L."/>
            <person name="Garin J."/>
            <person name="Barbier-Brygoo H."/>
            <person name="Ephritikhine G."/>
        </authorList>
    </citation>
    <scope>IDENTIFICATION BY MASS SPECTROMETRY</scope>
    <scope>SUBCELLULAR LOCATION [LARGE SCALE ANALYSIS]</scope>
</reference>
<reference key="5">
    <citation type="journal article" date="2010" name="Cell Host Microbe">
        <title>Receptor-like cytoplasmic kinases integrate signaling from multiple plant immune receptors and are targeted by a Pseudomonas syringae effector.</title>
        <authorList>
            <person name="Zhang J."/>
            <person name="Li W."/>
            <person name="Xiang T."/>
            <person name="Liu Z."/>
            <person name="Laluk K."/>
            <person name="Ding X."/>
            <person name="Zou Y."/>
            <person name="Gao M."/>
            <person name="Zhang X."/>
            <person name="Chen S."/>
            <person name="Mengiste T."/>
            <person name="Zhang Y."/>
            <person name="Zhou J.M."/>
        </authorList>
    </citation>
    <scope>GENE FAMILY</scope>
    <scope>NOMENCLATURE</scope>
</reference>
<dbReference type="EC" id="2.7.11.1" evidence="6"/>
<dbReference type="EMBL" id="AB009049">
    <property type="protein sequence ID" value="BAB11274.1"/>
    <property type="molecule type" value="Genomic_DNA"/>
</dbReference>
<dbReference type="EMBL" id="CP002688">
    <property type="protein sequence ID" value="AED96769.1"/>
    <property type="molecule type" value="Genomic_DNA"/>
</dbReference>
<dbReference type="EMBL" id="AY128371">
    <property type="protein sequence ID" value="AAM91574.1"/>
    <property type="molecule type" value="mRNA"/>
</dbReference>
<dbReference type="EMBL" id="BT008507">
    <property type="protein sequence ID" value="AAP37866.1"/>
    <property type="molecule type" value="mRNA"/>
</dbReference>
<dbReference type="RefSeq" id="NP_200457.1">
    <property type="nucleotide sequence ID" value="NM_125029.3"/>
</dbReference>
<dbReference type="SMR" id="Q9FM85"/>
<dbReference type="BioGRID" id="20991">
    <property type="interactions" value="2"/>
</dbReference>
<dbReference type="FunCoup" id="Q9FM85">
    <property type="interactions" value="2994"/>
</dbReference>
<dbReference type="STRING" id="3702.Q9FM85"/>
<dbReference type="iPTMnet" id="Q9FM85"/>
<dbReference type="PaxDb" id="3702-AT5G56460.1"/>
<dbReference type="ProteomicsDB" id="236359"/>
<dbReference type="EnsemblPlants" id="AT5G56460.1">
    <property type="protein sequence ID" value="AT5G56460.1"/>
    <property type="gene ID" value="AT5G56460"/>
</dbReference>
<dbReference type="GeneID" id="835747"/>
<dbReference type="Gramene" id="AT5G56460.1">
    <property type="protein sequence ID" value="AT5G56460.1"/>
    <property type="gene ID" value="AT5G56460"/>
</dbReference>
<dbReference type="KEGG" id="ath:AT5G56460"/>
<dbReference type="Araport" id="AT5G56460"/>
<dbReference type="TAIR" id="AT5G56460">
    <property type="gene designation" value="PBL16"/>
</dbReference>
<dbReference type="eggNOG" id="KOG1187">
    <property type="taxonomic scope" value="Eukaryota"/>
</dbReference>
<dbReference type="HOGENOM" id="CLU_000288_21_1_1"/>
<dbReference type="InParanoid" id="Q9FM85"/>
<dbReference type="OMA" id="DEFPKNG"/>
<dbReference type="PhylomeDB" id="Q9FM85"/>
<dbReference type="PRO" id="PR:Q9FM85"/>
<dbReference type="Proteomes" id="UP000006548">
    <property type="component" value="Chromosome 5"/>
</dbReference>
<dbReference type="ExpressionAtlas" id="Q9FM85">
    <property type="expression patterns" value="baseline and differential"/>
</dbReference>
<dbReference type="GO" id="GO:0005886">
    <property type="term" value="C:plasma membrane"/>
    <property type="evidence" value="ECO:0007005"/>
    <property type="project" value="TAIR"/>
</dbReference>
<dbReference type="GO" id="GO:0009506">
    <property type="term" value="C:plasmodesma"/>
    <property type="evidence" value="ECO:0007005"/>
    <property type="project" value="TAIR"/>
</dbReference>
<dbReference type="GO" id="GO:0005524">
    <property type="term" value="F:ATP binding"/>
    <property type="evidence" value="ECO:0007669"/>
    <property type="project" value="UniProtKB-KW"/>
</dbReference>
<dbReference type="GO" id="GO:0106310">
    <property type="term" value="F:protein serine kinase activity"/>
    <property type="evidence" value="ECO:0007669"/>
    <property type="project" value="RHEA"/>
</dbReference>
<dbReference type="GO" id="GO:0004674">
    <property type="term" value="F:protein serine/threonine kinase activity"/>
    <property type="evidence" value="ECO:0007669"/>
    <property type="project" value="UniProtKB-KW"/>
</dbReference>
<dbReference type="GO" id="GO:0006952">
    <property type="term" value="P:defense response"/>
    <property type="evidence" value="ECO:0007669"/>
    <property type="project" value="UniProtKB-KW"/>
</dbReference>
<dbReference type="FunFam" id="1.10.510.10:FF:000258">
    <property type="entry name" value="Probable serine/threonine-protein kinase PBL8"/>
    <property type="match status" value="1"/>
</dbReference>
<dbReference type="FunFam" id="3.30.200.20:FF:000228">
    <property type="entry name" value="Serine/threonine-protein kinase BIK1"/>
    <property type="match status" value="1"/>
</dbReference>
<dbReference type="Gene3D" id="3.30.200.20">
    <property type="entry name" value="Phosphorylase Kinase, domain 1"/>
    <property type="match status" value="1"/>
</dbReference>
<dbReference type="Gene3D" id="1.10.510.10">
    <property type="entry name" value="Transferase(Phosphotransferase) domain 1"/>
    <property type="match status" value="1"/>
</dbReference>
<dbReference type="InterPro" id="IPR011009">
    <property type="entry name" value="Kinase-like_dom_sf"/>
</dbReference>
<dbReference type="InterPro" id="IPR050823">
    <property type="entry name" value="Plant_Ser_Thr_Prot_Kinase"/>
</dbReference>
<dbReference type="InterPro" id="IPR000719">
    <property type="entry name" value="Prot_kinase_dom"/>
</dbReference>
<dbReference type="InterPro" id="IPR017441">
    <property type="entry name" value="Protein_kinase_ATP_BS"/>
</dbReference>
<dbReference type="InterPro" id="IPR001245">
    <property type="entry name" value="Ser-Thr/Tyr_kinase_cat_dom"/>
</dbReference>
<dbReference type="InterPro" id="IPR008271">
    <property type="entry name" value="Ser/Thr_kinase_AS"/>
</dbReference>
<dbReference type="PANTHER" id="PTHR45621">
    <property type="entry name" value="OS01G0588500 PROTEIN-RELATED"/>
    <property type="match status" value="1"/>
</dbReference>
<dbReference type="Pfam" id="PF07714">
    <property type="entry name" value="PK_Tyr_Ser-Thr"/>
    <property type="match status" value="1"/>
</dbReference>
<dbReference type="SUPFAM" id="SSF56112">
    <property type="entry name" value="Protein kinase-like (PK-like)"/>
    <property type="match status" value="1"/>
</dbReference>
<dbReference type="PROSITE" id="PS00107">
    <property type="entry name" value="PROTEIN_KINASE_ATP"/>
    <property type="match status" value="1"/>
</dbReference>
<dbReference type="PROSITE" id="PS50011">
    <property type="entry name" value="PROTEIN_KINASE_DOM"/>
    <property type="match status" value="1"/>
</dbReference>
<dbReference type="PROSITE" id="PS00108">
    <property type="entry name" value="PROTEIN_KINASE_ST"/>
    <property type="match status" value="1"/>
</dbReference>
<comment type="function">
    <text evidence="1">May be involved in plant defense signaling.</text>
</comment>
<comment type="catalytic activity">
    <reaction evidence="6">
        <text>L-seryl-[protein] + ATP = O-phospho-L-seryl-[protein] + ADP + H(+)</text>
        <dbReference type="Rhea" id="RHEA:17989"/>
        <dbReference type="Rhea" id="RHEA-COMP:9863"/>
        <dbReference type="Rhea" id="RHEA-COMP:11604"/>
        <dbReference type="ChEBI" id="CHEBI:15378"/>
        <dbReference type="ChEBI" id="CHEBI:29999"/>
        <dbReference type="ChEBI" id="CHEBI:30616"/>
        <dbReference type="ChEBI" id="CHEBI:83421"/>
        <dbReference type="ChEBI" id="CHEBI:456216"/>
        <dbReference type="EC" id="2.7.11.1"/>
    </reaction>
</comment>
<comment type="catalytic activity">
    <reaction evidence="6">
        <text>L-threonyl-[protein] + ATP = O-phospho-L-threonyl-[protein] + ADP + H(+)</text>
        <dbReference type="Rhea" id="RHEA:46608"/>
        <dbReference type="Rhea" id="RHEA-COMP:11060"/>
        <dbReference type="Rhea" id="RHEA-COMP:11605"/>
        <dbReference type="ChEBI" id="CHEBI:15378"/>
        <dbReference type="ChEBI" id="CHEBI:30013"/>
        <dbReference type="ChEBI" id="CHEBI:30616"/>
        <dbReference type="ChEBI" id="CHEBI:61977"/>
        <dbReference type="ChEBI" id="CHEBI:456216"/>
        <dbReference type="EC" id="2.7.11.1"/>
    </reaction>
</comment>
<comment type="subcellular location">
    <subcellularLocation>
        <location evidence="7">Cell membrane</location>
        <topology evidence="1">Lipid-anchor</topology>
    </subcellularLocation>
</comment>
<comment type="PTM">
    <text evidence="2">Palmitoylation at Cys-4 and Cys-6 are required for plasma membrane location.</text>
</comment>
<comment type="similarity">
    <text evidence="3">Belongs to the protein kinase superfamily. Ser/Thr protein kinase family.</text>
</comment>
<keyword id="KW-0067">ATP-binding</keyword>
<keyword id="KW-1003">Cell membrane</keyword>
<keyword id="KW-0418">Kinase</keyword>
<keyword id="KW-0449">Lipoprotein</keyword>
<keyword id="KW-0472">Membrane</keyword>
<keyword id="KW-0519">Myristate</keyword>
<keyword id="KW-0547">Nucleotide-binding</keyword>
<keyword id="KW-0564">Palmitate</keyword>
<keyword id="KW-0597">Phosphoprotein</keyword>
<keyword id="KW-0611">Plant defense</keyword>
<keyword id="KW-1185">Reference proteome</keyword>
<keyword id="KW-0723">Serine/threonine-protein kinase</keyword>
<keyword id="KW-0808">Transferase</keyword>
<sequence length="408" mass="45871">MGNCWCRFEPLNHRVSANAKSESPKEQSPTVEDKHIKEVQKLPSNPKEVEDLRRDSAANPLIAFTYEELKNITSNFRQDRVLGGGGFGSVYKGFIKEDLGDQEVPEPLPVAVKVHDGDNSFQGHREWLAEVIFLGQLSHPNLVKLIGYCCEDNHRVLIYEYMARGSVENNLFSRVLLPLSWAIRMKIAFGAAKGLAFLHEAKKPVIYRDFKTSNILLDMDYNAKLSDFGLAKDGPVGDKSHVSTRIMGTYGYAAPEYIMTGHLTPGSDVYSFGVVLLELLTGRKSLDKSRPTREQNLIDWALPLLKEKKKVLNIVDPKMNCEYPVKAVQKAAMLAYHCLNRNPKARPLMRDIVDSLEPLQATEEEALLVPPVQKAVITIIDEMPKNGLKKVEELKKVEEVKKVIEDAC</sequence>